<sequence>MFTRKSVILMAVLLIWSAVSYAERVKDLANVAGVRPNQLIGYGLVVGLSGTGDKTSYADQSLMSMLNKFGINLPPGTKTNSKNVAAVAVHADLPAFSKSGQRIDVTVSSLGNAKSLRGGTLLLTPLKGVDGNVYALAQGNLIVGGLDASGADGSRITVNVPSVGRVPGGGIVEKTVNTGFDLGNTITLNLKNSDFTTATNLVNAINAKLGKGTAYATDAESVEVMAPRIPNQRVAFLSVIENIEVTPGVDSAKVIINSRTGTVVIGSNVKVSAAAVTHGNLVVKVSESKDVSQPNPFAGGNTQVTPKTELSVESEGKGRMFKFPKGVTLDDIVQAVNKVGAAPGDLVAILEALKQSGALSADLMVI</sequence>
<organism>
    <name type="scientific">Hydrogenovibrio crunogenus (strain DSM 25203 / XCL-2)</name>
    <name type="common">Thiomicrospira crunogena</name>
    <dbReference type="NCBI Taxonomy" id="317025"/>
    <lineage>
        <taxon>Bacteria</taxon>
        <taxon>Pseudomonadati</taxon>
        <taxon>Pseudomonadota</taxon>
        <taxon>Gammaproteobacteria</taxon>
        <taxon>Thiotrichales</taxon>
        <taxon>Piscirickettsiaceae</taxon>
        <taxon>Hydrogenovibrio</taxon>
    </lineage>
</organism>
<feature type="signal peptide" evidence="1">
    <location>
        <begin position="1"/>
        <end position="22"/>
    </location>
</feature>
<feature type="chain" id="PRO_0000236324" description="Flagellar P-ring protein">
    <location>
        <begin position="23"/>
        <end position="366"/>
    </location>
</feature>
<accession>Q31FL4</accession>
<comment type="function">
    <text evidence="1">Assembles around the rod to form the L-ring and probably protects the motor/basal body from shearing forces during rotation.</text>
</comment>
<comment type="subunit">
    <text evidence="1">The basal body constitutes a major portion of the flagellar organelle and consists of four rings (L,P,S, and M) mounted on a central rod.</text>
</comment>
<comment type="subcellular location">
    <subcellularLocation>
        <location evidence="1">Periplasm</location>
    </subcellularLocation>
    <subcellularLocation>
        <location evidence="1">Bacterial flagellum basal body</location>
    </subcellularLocation>
</comment>
<comment type="similarity">
    <text evidence="1">Belongs to the FlgI family.</text>
</comment>
<keyword id="KW-0975">Bacterial flagellum</keyword>
<keyword id="KW-0574">Periplasm</keyword>
<keyword id="KW-0732">Signal</keyword>
<evidence type="ECO:0000255" key="1">
    <source>
        <dbReference type="HAMAP-Rule" id="MF_00416"/>
    </source>
</evidence>
<name>FLGI_HYDCU</name>
<reference key="1">
    <citation type="journal article" date="2006" name="PLoS Biol.">
        <title>The genome of deep-sea vent chemolithoautotroph Thiomicrospira crunogena XCL-2.</title>
        <authorList>
            <person name="Scott K.M."/>
            <person name="Sievert S.M."/>
            <person name="Abril F.N."/>
            <person name="Ball L.A."/>
            <person name="Barrett C.J."/>
            <person name="Blake R.A."/>
            <person name="Boller A.J."/>
            <person name="Chain P.S.G."/>
            <person name="Clark J.A."/>
            <person name="Davis C.R."/>
            <person name="Detter C."/>
            <person name="Do K.F."/>
            <person name="Dobrinski K.P."/>
            <person name="Faza B.I."/>
            <person name="Fitzpatrick K.A."/>
            <person name="Freyermuth S.K."/>
            <person name="Harmer T.L."/>
            <person name="Hauser L.J."/>
            <person name="Huegler M."/>
            <person name="Kerfeld C.A."/>
            <person name="Klotz M.G."/>
            <person name="Kong W.W."/>
            <person name="Land M."/>
            <person name="Lapidus A."/>
            <person name="Larimer F.W."/>
            <person name="Longo D.L."/>
            <person name="Lucas S."/>
            <person name="Malfatti S.A."/>
            <person name="Massey S.E."/>
            <person name="Martin D.D."/>
            <person name="McCuddin Z."/>
            <person name="Meyer F."/>
            <person name="Moore J.L."/>
            <person name="Ocampo L.H. Jr."/>
            <person name="Paul J.H."/>
            <person name="Paulsen I.T."/>
            <person name="Reep D.K."/>
            <person name="Ren Q."/>
            <person name="Ross R.L."/>
            <person name="Sato P.Y."/>
            <person name="Thomas P."/>
            <person name="Tinkham L.E."/>
            <person name="Zeruth G.T."/>
        </authorList>
    </citation>
    <scope>NUCLEOTIDE SEQUENCE [LARGE SCALE GENOMIC DNA]</scope>
    <source>
        <strain>DSM 25203 / XCL-2</strain>
    </source>
</reference>
<dbReference type="EMBL" id="CP000109">
    <property type="protein sequence ID" value="ABB42059.1"/>
    <property type="molecule type" value="Genomic_DNA"/>
</dbReference>
<dbReference type="SMR" id="Q31FL4"/>
<dbReference type="STRING" id="317025.Tcr_1467"/>
<dbReference type="KEGG" id="tcx:Tcr_1467"/>
<dbReference type="eggNOG" id="COG1706">
    <property type="taxonomic scope" value="Bacteria"/>
</dbReference>
<dbReference type="HOGENOM" id="CLU_045235_1_0_6"/>
<dbReference type="OrthoDB" id="9786431at2"/>
<dbReference type="GO" id="GO:0009428">
    <property type="term" value="C:bacterial-type flagellum basal body, distal rod, P ring"/>
    <property type="evidence" value="ECO:0007669"/>
    <property type="project" value="InterPro"/>
</dbReference>
<dbReference type="GO" id="GO:0030288">
    <property type="term" value="C:outer membrane-bounded periplasmic space"/>
    <property type="evidence" value="ECO:0007669"/>
    <property type="project" value="InterPro"/>
</dbReference>
<dbReference type="GO" id="GO:0005198">
    <property type="term" value="F:structural molecule activity"/>
    <property type="evidence" value="ECO:0007669"/>
    <property type="project" value="InterPro"/>
</dbReference>
<dbReference type="GO" id="GO:0071973">
    <property type="term" value="P:bacterial-type flagellum-dependent cell motility"/>
    <property type="evidence" value="ECO:0007669"/>
    <property type="project" value="InterPro"/>
</dbReference>
<dbReference type="HAMAP" id="MF_00416">
    <property type="entry name" value="FlgI"/>
    <property type="match status" value="1"/>
</dbReference>
<dbReference type="InterPro" id="IPR001782">
    <property type="entry name" value="Flag_FlgI"/>
</dbReference>
<dbReference type="NCBIfam" id="NF003676">
    <property type="entry name" value="PRK05303.1"/>
    <property type="match status" value="1"/>
</dbReference>
<dbReference type="PANTHER" id="PTHR30381">
    <property type="entry name" value="FLAGELLAR P-RING PERIPLASMIC PROTEIN FLGI"/>
    <property type="match status" value="1"/>
</dbReference>
<dbReference type="PANTHER" id="PTHR30381:SF0">
    <property type="entry name" value="FLAGELLAR P-RING PROTEIN"/>
    <property type="match status" value="1"/>
</dbReference>
<dbReference type="Pfam" id="PF02119">
    <property type="entry name" value="FlgI"/>
    <property type="match status" value="1"/>
</dbReference>
<dbReference type="PRINTS" id="PR01010">
    <property type="entry name" value="FLGPRINGFLGI"/>
</dbReference>
<proteinExistence type="inferred from homology"/>
<gene>
    <name evidence="1" type="primary">flgI</name>
    <name type="ordered locus">Tcr_1467</name>
</gene>
<protein>
    <recommendedName>
        <fullName evidence="1">Flagellar P-ring protein</fullName>
    </recommendedName>
    <alternativeName>
        <fullName evidence="1">Basal body P-ring protein</fullName>
    </alternativeName>
</protein>